<reference key="1">
    <citation type="journal article" date="2015" name="PLoS Genet.">
        <title>The dynamic genome and transcriptome of the human fungal pathogen Blastomyces and close relative Emmonsia.</title>
        <authorList>
            <person name="Munoz J.F."/>
            <person name="Gauthier G.M."/>
            <person name="Desjardins C.A."/>
            <person name="Gallo J.E."/>
            <person name="Holder J."/>
            <person name="Sullivan T.D."/>
            <person name="Marty A.J."/>
            <person name="Carmen J.C."/>
            <person name="Chen Z."/>
            <person name="Ding L."/>
            <person name="Gujja S."/>
            <person name="Magrini V."/>
            <person name="Misas E."/>
            <person name="Mitreva M."/>
            <person name="Priest M."/>
            <person name="Saif S."/>
            <person name="Whiston E.A."/>
            <person name="Young S."/>
            <person name="Zeng Q."/>
            <person name="Goldman W.E."/>
            <person name="Mardis E.R."/>
            <person name="Taylor J.W."/>
            <person name="McEwen J.G."/>
            <person name="Clay O.K."/>
            <person name="Klein B.S."/>
            <person name="Cuomo C.A."/>
        </authorList>
    </citation>
    <scope>NUCLEOTIDE SEQUENCE [LARGE SCALE GENOMIC DNA]</scope>
    <source>
        <strain>ER-3 / ATCC MYA-2586</strain>
    </source>
</reference>
<comment type="function">
    <text evidence="1 2">Catalytic component of the signal peptidase complex (SPC) which catalyzes the cleavage of N-terminal signal sequences from nascent proteins as they are translocated into the lumen of the endoplasmic reticulum (By similarity). Specifically cleaves N-terminal signal peptides that contain a hydrophobic alpha-helix (h-region) shorter than 18-20 amino acids (By similarity).</text>
</comment>
<comment type="catalytic activity">
    <reaction evidence="1">
        <text>Cleavage of hydrophobic, N-terminal signal or leader sequences from secreted and periplasmic proteins.</text>
        <dbReference type="EC" id="3.4.21.89"/>
    </reaction>
</comment>
<comment type="subunit">
    <text evidence="1 2">Component of the signal peptidase complex (SPC) composed of a catalytic subunit SEC11 and three accessory subunits SPC1, SPC2 and SPC3 (By similarity). The complex induces a local thinning of the ER membrane which is used to measure the length of the signal peptide (SP) h-region of protein substrates. This ensures the selectivity of the complex towards h-regions shorter than 18-20 amino acids (By similarity). SPC associates with the translocon complex (By similarity).</text>
</comment>
<comment type="subcellular location">
    <subcellularLocation>
        <location evidence="1">Endoplasmic reticulum membrane</location>
        <topology evidence="1">Single-pass type II membrane protein</topology>
    </subcellularLocation>
</comment>
<comment type="domain">
    <text evidence="2">The C-terminal short (CTS) helix is essential for catalytic activity. It may be accommodated as a transmembrane helix in the thinned membrane environment of the complex, similarly to the signal peptide in the complex substrates.</text>
</comment>
<comment type="similarity">
    <text evidence="5">Belongs to the peptidase S26B family.</text>
</comment>
<feature type="chain" id="PRO_0000412310" description="Signal peptidase complex catalytic subunit SEC11">
    <location>
        <begin position="1"/>
        <end position="196"/>
    </location>
</feature>
<feature type="topological domain" description="Cytoplasmic" evidence="3">
    <location>
        <begin position="1"/>
        <end position="14"/>
    </location>
</feature>
<feature type="transmembrane region" description="Helical; Signal-anchor for type II membrane protein" evidence="3">
    <location>
        <begin position="15"/>
        <end position="33"/>
    </location>
</feature>
<feature type="topological domain" description="Lumenal" evidence="3">
    <location>
        <begin position="34"/>
        <end position="196"/>
    </location>
</feature>
<feature type="region of interest" description="Disordered" evidence="4">
    <location>
        <begin position="101"/>
        <end position="133"/>
    </location>
</feature>
<feature type="region of interest" description="C-terminal short (CTS) helix" evidence="2">
    <location>
        <begin position="182"/>
        <end position="193"/>
    </location>
</feature>
<feature type="compositionally biased region" description="Polar residues" evidence="4">
    <location>
        <begin position="118"/>
        <end position="133"/>
    </location>
</feature>
<feature type="active site" description="Charge relay system" evidence="1">
    <location>
        <position position="53"/>
    </location>
</feature>
<feature type="active site" description="Charge relay system" evidence="1">
    <location>
        <position position="92"/>
    </location>
</feature>
<feature type="active site" description="Charge relay system" evidence="1">
    <location>
        <position position="138"/>
    </location>
</feature>
<feature type="glycosylation site" description="N-linked (GlcNAc...) asparagine" evidence="3">
    <location>
        <position position="134"/>
    </location>
</feature>
<keyword id="KW-0256">Endoplasmic reticulum</keyword>
<keyword id="KW-0325">Glycoprotein</keyword>
<keyword id="KW-0378">Hydrolase</keyword>
<keyword id="KW-0472">Membrane</keyword>
<keyword id="KW-0645">Protease</keyword>
<keyword id="KW-0735">Signal-anchor</keyword>
<keyword id="KW-0812">Transmembrane</keyword>
<keyword id="KW-1133">Transmembrane helix</keyword>
<proteinExistence type="inferred from homology"/>
<accession>C5G8L5</accession>
<evidence type="ECO:0000250" key="1">
    <source>
        <dbReference type="UniProtKB" id="P15367"/>
    </source>
</evidence>
<evidence type="ECO:0000250" key="2">
    <source>
        <dbReference type="UniProtKB" id="P67812"/>
    </source>
</evidence>
<evidence type="ECO:0000255" key="3"/>
<evidence type="ECO:0000256" key="4">
    <source>
        <dbReference type="SAM" id="MobiDB-lite"/>
    </source>
</evidence>
<evidence type="ECO:0000305" key="5"/>
<name>SEC11_AJEDR</name>
<sequence>MLSSLSPYMANPRQTFTQVLNFALVLSTAFMLWKGLSVYTNSASPIVVVLSGSMEPAFQRGDLLFLWNRSPRVDVGEIVVYNVRGKDIPIVHRVMRTFPDVPGKDKTKKGGKQGVEASPSSLESQKLLTKGDNNLSDDTELYARGQDYLDRKEDIVGSVRGYIPAVGYVTIMLSEHPWLKSVLLGFMGLMVILQRE</sequence>
<organism>
    <name type="scientific">Ajellomyces dermatitidis (strain ER-3 / ATCC MYA-2586)</name>
    <name type="common">Blastomyces dermatitidis</name>
    <dbReference type="NCBI Taxonomy" id="559297"/>
    <lineage>
        <taxon>Eukaryota</taxon>
        <taxon>Fungi</taxon>
        <taxon>Dikarya</taxon>
        <taxon>Ascomycota</taxon>
        <taxon>Pezizomycotina</taxon>
        <taxon>Eurotiomycetes</taxon>
        <taxon>Eurotiomycetidae</taxon>
        <taxon>Onygenales</taxon>
        <taxon>Ajellomycetaceae</taxon>
        <taxon>Blastomyces</taxon>
    </lineage>
</organism>
<gene>
    <name type="primary">SEC11</name>
    <name type="ORF">BDCG_00894</name>
</gene>
<dbReference type="EC" id="3.4.21.89" evidence="1"/>
<dbReference type="EMBL" id="EQ999973">
    <property type="protein sequence ID" value="EEQ84089.1"/>
    <property type="molecule type" value="Genomic_DNA"/>
</dbReference>
<dbReference type="SMR" id="C5G8L5"/>
<dbReference type="STRING" id="559297.C5G8L5"/>
<dbReference type="GlyCosmos" id="C5G8L5">
    <property type="glycosylation" value="1 site, No reported glycans"/>
</dbReference>
<dbReference type="VEuPathDB" id="FungiDB:BDCG_00894"/>
<dbReference type="eggNOG" id="KOG3342">
    <property type="taxonomic scope" value="Eukaryota"/>
</dbReference>
<dbReference type="HOGENOM" id="CLU_089996_0_0_1"/>
<dbReference type="OMA" id="ILMNEYP"/>
<dbReference type="GO" id="GO:0005787">
    <property type="term" value="C:signal peptidase complex"/>
    <property type="evidence" value="ECO:0007669"/>
    <property type="project" value="EnsemblFungi"/>
</dbReference>
<dbReference type="GO" id="GO:0004252">
    <property type="term" value="F:serine-type endopeptidase activity"/>
    <property type="evidence" value="ECO:0007669"/>
    <property type="project" value="UniProtKB-EC"/>
</dbReference>
<dbReference type="GO" id="GO:0045047">
    <property type="term" value="P:protein targeting to ER"/>
    <property type="evidence" value="ECO:0007669"/>
    <property type="project" value="EnsemblFungi"/>
</dbReference>
<dbReference type="GO" id="GO:0006465">
    <property type="term" value="P:signal peptide processing"/>
    <property type="evidence" value="ECO:0007669"/>
    <property type="project" value="EnsemblFungi"/>
</dbReference>
<dbReference type="CDD" id="cd06530">
    <property type="entry name" value="S26_SPase_I"/>
    <property type="match status" value="1"/>
</dbReference>
<dbReference type="InterPro" id="IPR036286">
    <property type="entry name" value="LexA/Signal_pep-like_sf"/>
</dbReference>
<dbReference type="InterPro" id="IPR019756">
    <property type="entry name" value="Pept_S26A_signal_pept_1_Ser-AS"/>
</dbReference>
<dbReference type="InterPro" id="IPR019533">
    <property type="entry name" value="Peptidase_S26"/>
</dbReference>
<dbReference type="InterPro" id="IPR001733">
    <property type="entry name" value="Peptidase_S26B"/>
</dbReference>
<dbReference type="NCBIfam" id="TIGR02228">
    <property type="entry name" value="sigpep_I_arch"/>
    <property type="match status" value="1"/>
</dbReference>
<dbReference type="PANTHER" id="PTHR10806">
    <property type="entry name" value="SIGNAL PEPTIDASE COMPLEX CATALYTIC SUBUNIT SEC11"/>
    <property type="match status" value="1"/>
</dbReference>
<dbReference type="PANTHER" id="PTHR10806:SF6">
    <property type="entry name" value="SIGNAL PEPTIDASE COMPLEX CATALYTIC SUBUNIT SEC11"/>
    <property type="match status" value="1"/>
</dbReference>
<dbReference type="PRINTS" id="PR00728">
    <property type="entry name" value="SIGNALPTASE"/>
</dbReference>
<dbReference type="SUPFAM" id="SSF51306">
    <property type="entry name" value="LexA/Signal peptidase"/>
    <property type="match status" value="1"/>
</dbReference>
<dbReference type="PROSITE" id="PS00501">
    <property type="entry name" value="SPASE_I_1"/>
    <property type="match status" value="1"/>
</dbReference>
<protein>
    <recommendedName>
        <fullName>Signal peptidase complex catalytic subunit SEC11</fullName>
        <ecNumber evidence="1">3.4.21.89</ecNumber>
    </recommendedName>
    <alternativeName>
        <fullName>Signal peptidase I</fullName>
    </alternativeName>
</protein>